<proteinExistence type="evidence at protein level"/>
<accession>Q9AJU0</accession>
<evidence type="ECO:0000250" key="1">
    <source>
        <dbReference type="UniProtKB" id="Q9L9F2"/>
    </source>
</evidence>
<evidence type="ECO:0000255" key="2"/>
<evidence type="ECO:0000269" key="3">
    <source>
    </source>
</evidence>
<evidence type="ECO:0000303" key="4">
    <source>
    </source>
</evidence>
<evidence type="ECO:0000305" key="5"/>
<gene>
    <name evidence="4" type="primary">elmMIII</name>
</gene>
<comment type="function">
    <text evidence="3">O-methyltransferase involved in the biosynthesis of the permethylated L-rhamnose moiety of elloramycin, an antitumor polyketide. Mediates the methylation of the hydroxy groups at the 4'-position after the sugar moiety has been attached to the aglycon.</text>
</comment>
<comment type="catalytic activity">
    <reaction evidence="3">
        <text>8-demethyl-8-(2,3-di-O-methyl-alpha-L-rhamnosyl)-tetracenomycin C + S-adenosyl-L-methionine = 8-demethyl-8-(2,3,4-tri-O-methyl-alpha-L-rhamnosyl)-tetracenomycin C + S-adenosyl-L-homocysteine + H(+)</text>
        <dbReference type="Rhea" id="RHEA:41548"/>
        <dbReference type="ChEBI" id="CHEBI:15378"/>
        <dbReference type="ChEBI" id="CHEBI:57856"/>
        <dbReference type="ChEBI" id="CHEBI:59789"/>
        <dbReference type="ChEBI" id="CHEBI:78286"/>
        <dbReference type="ChEBI" id="CHEBI:78287"/>
        <dbReference type="EC" id="2.1.1.307"/>
    </reaction>
</comment>
<comment type="cofactor">
    <cofactor evidence="5">
        <name>Mg(2+)</name>
        <dbReference type="ChEBI" id="CHEBI:18420"/>
    </cofactor>
</comment>
<comment type="pathway">
    <text evidence="5">Antibiotic biosynthesis.</text>
</comment>
<comment type="similarity">
    <text evidence="5">Belongs to the methyltransferase TylF/MycF family.</text>
</comment>
<name>ELMM3_STROV</name>
<dbReference type="EC" id="2.1.1.307" evidence="3"/>
<dbReference type="EMBL" id="AJ300305">
    <property type="protein sequence ID" value="CAD57141.1"/>
    <property type="molecule type" value="Genomic_DNA"/>
</dbReference>
<dbReference type="EMBL" id="AM900040">
    <property type="protein sequence ID" value="CAP12609.1"/>
    <property type="molecule type" value="Genomic_DNA"/>
</dbReference>
<dbReference type="SMR" id="Q9AJU0"/>
<dbReference type="KEGG" id="ag:CAP12609"/>
<dbReference type="BioCyc" id="MetaCyc:MONOMER-18591"/>
<dbReference type="BRENDA" id="2.1.1.307">
    <property type="organism ID" value="6068"/>
</dbReference>
<dbReference type="GO" id="GO:0046872">
    <property type="term" value="F:metal ion binding"/>
    <property type="evidence" value="ECO:0007669"/>
    <property type="project" value="UniProtKB-KW"/>
</dbReference>
<dbReference type="GO" id="GO:0008168">
    <property type="term" value="F:methyltransferase activity"/>
    <property type="evidence" value="ECO:0000314"/>
    <property type="project" value="UniProtKB"/>
</dbReference>
<dbReference type="GO" id="GO:0017000">
    <property type="term" value="P:antibiotic biosynthetic process"/>
    <property type="evidence" value="ECO:0000314"/>
    <property type="project" value="UniProtKB"/>
</dbReference>
<dbReference type="GO" id="GO:0032259">
    <property type="term" value="P:methylation"/>
    <property type="evidence" value="ECO:0000314"/>
    <property type="project" value="UniProtKB"/>
</dbReference>
<dbReference type="FunFam" id="3.40.50.150:FF:000331">
    <property type="entry name" value="Macrocin O-methyltransferase"/>
    <property type="match status" value="1"/>
</dbReference>
<dbReference type="Gene3D" id="3.40.50.150">
    <property type="entry name" value="Vaccinia Virus protein VP39"/>
    <property type="match status" value="1"/>
</dbReference>
<dbReference type="InterPro" id="IPR029063">
    <property type="entry name" value="SAM-dependent_MTases_sf"/>
</dbReference>
<dbReference type="InterPro" id="IPR008884">
    <property type="entry name" value="TylF_MeTrfase"/>
</dbReference>
<dbReference type="PANTHER" id="PTHR40036">
    <property type="entry name" value="MACROCIN O-METHYLTRANSFERASE"/>
    <property type="match status" value="1"/>
</dbReference>
<dbReference type="PANTHER" id="PTHR40036:SF1">
    <property type="entry name" value="MACROCIN O-METHYLTRANSFERASE"/>
    <property type="match status" value="1"/>
</dbReference>
<dbReference type="Pfam" id="PF05711">
    <property type="entry name" value="TylF"/>
    <property type="match status" value="1"/>
</dbReference>
<dbReference type="SUPFAM" id="SSF53335">
    <property type="entry name" value="S-adenosyl-L-methionine-dependent methyltransferases"/>
    <property type="match status" value="1"/>
</dbReference>
<feature type="chain" id="PRO_0000430715" description="8-demethyl-8-(2,3-dimethoxy-alpha-L-rhamnosyl)-tetracenomycin-C 4'-O-methyltransferase">
    <location>
        <begin position="1"/>
        <end position="261"/>
    </location>
</feature>
<feature type="binding site" evidence="1">
    <location>
        <begin position="53"/>
        <end position="54"/>
    </location>
    <ligand>
        <name>S-adenosyl-L-methionine</name>
        <dbReference type="ChEBI" id="CHEBI:59789"/>
    </ligand>
</feature>
<feature type="binding site" evidence="1">
    <location>
        <begin position="81"/>
        <end position="85"/>
    </location>
    <ligand>
        <name>S-adenosyl-L-methionine</name>
        <dbReference type="ChEBI" id="CHEBI:59789"/>
    </ligand>
</feature>
<feature type="binding site" evidence="1">
    <location>
        <begin position="111"/>
        <end position="115"/>
    </location>
    <ligand>
        <name>S-adenosyl-L-methionine</name>
        <dbReference type="ChEBI" id="CHEBI:59789"/>
    </ligand>
</feature>
<feature type="binding site" evidence="1">
    <location>
        <position position="167"/>
    </location>
    <ligand>
        <name>S-adenosyl-L-methionine</name>
        <dbReference type="ChEBI" id="CHEBI:59789"/>
    </ligand>
</feature>
<feature type="binding site" evidence="1">
    <location>
        <begin position="185"/>
        <end position="186"/>
    </location>
    <ligand>
        <name>S-adenosyl-L-methionine</name>
        <dbReference type="ChEBI" id="CHEBI:59789"/>
    </ligand>
</feature>
<feature type="binding site" evidence="2">
    <location>
        <position position="185"/>
    </location>
    <ligand>
        <name>Mg(2+)</name>
        <dbReference type="ChEBI" id="CHEBI:18420"/>
    </ligand>
</feature>
<feature type="binding site" evidence="1">
    <location>
        <position position="191"/>
    </location>
    <ligand>
        <name>S-adenosyl-L-methionine</name>
        <dbReference type="ChEBI" id="CHEBI:59789"/>
    </ligand>
</feature>
<feature type="binding site" evidence="2">
    <location>
        <position position="212"/>
    </location>
    <ligand>
        <name>Mg(2+)</name>
        <dbReference type="ChEBI" id="CHEBI:18420"/>
    </ligand>
</feature>
<feature type="binding site" evidence="2">
    <location>
        <position position="213"/>
    </location>
    <ligand>
        <name>Mg(2+)</name>
        <dbReference type="ChEBI" id="CHEBI:18420"/>
    </ligand>
</feature>
<protein>
    <recommendedName>
        <fullName evidence="5">8-demethyl-8-(2,3-dimethoxy-alpha-L-rhamnosyl)-tetracenomycin-C 4'-O-methyltransferase</fullName>
        <ecNumber evidence="3">2.1.1.307</ecNumber>
    </recommendedName>
    <alternativeName>
        <fullName evidence="4">O-methyltransferase III</fullName>
    </alternativeName>
</protein>
<keyword id="KW-0045">Antibiotic biosynthesis</keyword>
<keyword id="KW-0460">Magnesium</keyword>
<keyword id="KW-0479">Metal-binding</keyword>
<keyword id="KW-0489">Methyltransferase</keyword>
<keyword id="KW-0949">S-adenosyl-L-methionine</keyword>
<keyword id="KW-0808">Transferase</keyword>
<organism>
    <name type="scientific">Streptomyces olivaceus</name>
    <dbReference type="NCBI Taxonomy" id="47716"/>
    <lineage>
        <taxon>Bacteria</taxon>
        <taxon>Bacillati</taxon>
        <taxon>Actinomycetota</taxon>
        <taxon>Actinomycetes</taxon>
        <taxon>Kitasatosporales</taxon>
        <taxon>Streptomycetaceae</taxon>
        <taxon>Streptomyces</taxon>
    </lineage>
</organism>
<sequence>MTEDARDLYLDLMKKVLTNLIYRDAPIQTFVYDGEPDADPRLLGRDWPSVAHTMVGLKRLDNLQYCVETVLADGVPGDLVETGVWRGGSSIFMRAVLRAHGDTARRVWVADSFEGMPEVGADSHAVDREMRLHEHNGVLAVPLEQVRANFERYGLLDDQVRFLPGWFKDTLPGAPTGRLAVIRLDGDLYESTTDALENLMPRLSPGGFVIIDDYAIDACRDAVHDYRGRYGISDPISEIDGTGVFWRHTAASARSLQPATV</sequence>
<reference key="1">
    <citation type="journal article" date="2001" name="J. Biol. Chem.">
        <title>Deoxysugar methylation during biosynthesis of the antitumor polyketide elloramycin by Streptomyces olivaceus. Characterization of three methyltransferase genes.</title>
        <authorList>
            <person name="Patallo E.P."/>
            <person name="Blanco G."/>
            <person name="Fischer C."/>
            <person name="Brana A.F."/>
            <person name="Rohr J."/>
            <person name="Mendez C."/>
            <person name="Salas J.A."/>
        </authorList>
    </citation>
    <scope>NUCLEOTIDE SEQUENCE [GENOMIC DNA]</scope>
    <scope>FUNCTION</scope>
    <scope>CATALYTIC ACTIVITY</scope>
    <source>
        <strain>Tu 2353</strain>
    </source>
</reference>
<reference key="2">
    <citation type="journal article" date="2008" name="Microbiology">
        <title>Biosynthesis of elloramycin in Streptomyces olivaceus requires glycosylation by enzymes encoded outside the aglycon cluster.</title>
        <authorList>
            <person name="Ramos A."/>
            <person name="Lombo F."/>
            <person name="Brana A.F."/>
            <person name="Rohr J."/>
            <person name="Mendez C."/>
            <person name="Salas J.A."/>
        </authorList>
    </citation>
    <scope>NUCLEOTIDE SEQUENCE [GENOMIC DNA]</scope>
    <source>
        <strain>Tu 2353</strain>
    </source>
</reference>